<comment type="function">
    <text evidence="1">Catalyzes the formation of 6,7-dimethyl-8-ribityllumazine by condensation of 5-amino-6-(D-ribitylamino)uracil with 3,4-dihydroxy-2-butanone 4-phosphate. This is the penultimate step in the biosynthesis of riboflavin.</text>
</comment>
<comment type="catalytic activity">
    <reaction evidence="1">
        <text>(2S)-2-hydroxy-3-oxobutyl phosphate + 5-amino-6-(D-ribitylamino)uracil = 6,7-dimethyl-8-(1-D-ribityl)lumazine + phosphate + 2 H2O + H(+)</text>
        <dbReference type="Rhea" id="RHEA:26152"/>
        <dbReference type="ChEBI" id="CHEBI:15377"/>
        <dbReference type="ChEBI" id="CHEBI:15378"/>
        <dbReference type="ChEBI" id="CHEBI:15934"/>
        <dbReference type="ChEBI" id="CHEBI:43474"/>
        <dbReference type="ChEBI" id="CHEBI:58201"/>
        <dbReference type="ChEBI" id="CHEBI:58830"/>
        <dbReference type="EC" id="2.5.1.78"/>
    </reaction>
</comment>
<comment type="pathway">
    <text evidence="1">Cofactor biosynthesis; riboflavin biosynthesis; riboflavin from 2-hydroxy-3-oxobutyl phosphate and 5-amino-6-(D-ribitylamino)uracil: step 1/2.</text>
</comment>
<comment type="similarity">
    <text evidence="1">Belongs to the DMRL synthase family.</text>
</comment>
<gene>
    <name evidence="1" type="primary">ribH</name>
    <name type="ordered locus">Reut_A0769</name>
</gene>
<organism>
    <name type="scientific">Cupriavidus pinatubonensis (strain JMP 134 / LMG 1197)</name>
    <name type="common">Cupriavidus necator (strain JMP 134)</name>
    <dbReference type="NCBI Taxonomy" id="264198"/>
    <lineage>
        <taxon>Bacteria</taxon>
        <taxon>Pseudomonadati</taxon>
        <taxon>Pseudomonadota</taxon>
        <taxon>Betaproteobacteria</taxon>
        <taxon>Burkholderiales</taxon>
        <taxon>Burkholderiaceae</taxon>
        <taxon>Cupriavidus</taxon>
    </lineage>
</organism>
<protein>
    <recommendedName>
        <fullName evidence="1">6,7-dimethyl-8-ribityllumazine synthase</fullName>
        <shortName evidence="1">DMRL synthase</shortName>
        <shortName evidence="1">LS</shortName>
        <shortName evidence="1">Lumazine synthase</shortName>
        <ecNumber evidence="1">2.5.1.78</ecNumber>
    </recommendedName>
</protein>
<feature type="chain" id="PRO_1000040497" description="6,7-dimethyl-8-ribityllumazine synthase">
    <location>
        <begin position="1"/>
        <end position="167"/>
    </location>
</feature>
<feature type="active site" description="Proton donor" evidence="1">
    <location>
        <position position="90"/>
    </location>
</feature>
<feature type="binding site" evidence="1">
    <location>
        <position position="24"/>
    </location>
    <ligand>
        <name>5-amino-6-(D-ribitylamino)uracil</name>
        <dbReference type="ChEBI" id="CHEBI:15934"/>
    </ligand>
</feature>
<feature type="binding site" evidence="1">
    <location>
        <begin position="58"/>
        <end position="60"/>
    </location>
    <ligand>
        <name>5-amino-6-(D-ribitylamino)uracil</name>
        <dbReference type="ChEBI" id="CHEBI:15934"/>
    </ligand>
</feature>
<feature type="binding site" evidence="1">
    <location>
        <begin position="82"/>
        <end position="84"/>
    </location>
    <ligand>
        <name>5-amino-6-(D-ribitylamino)uracil</name>
        <dbReference type="ChEBI" id="CHEBI:15934"/>
    </ligand>
</feature>
<feature type="binding site" evidence="1">
    <location>
        <begin position="87"/>
        <end position="88"/>
    </location>
    <ligand>
        <name>(2S)-2-hydroxy-3-oxobutyl phosphate</name>
        <dbReference type="ChEBI" id="CHEBI:58830"/>
    </ligand>
</feature>
<feature type="binding site" evidence="1">
    <location>
        <position position="115"/>
    </location>
    <ligand>
        <name>5-amino-6-(D-ribitylamino)uracil</name>
        <dbReference type="ChEBI" id="CHEBI:15934"/>
    </ligand>
</feature>
<feature type="binding site" evidence="1">
    <location>
        <position position="129"/>
    </location>
    <ligand>
        <name>(2S)-2-hydroxy-3-oxobutyl phosphate</name>
        <dbReference type="ChEBI" id="CHEBI:58830"/>
    </ligand>
</feature>
<reference key="1">
    <citation type="journal article" date="2010" name="PLoS ONE">
        <title>The complete multipartite genome sequence of Cupriavidus necator JMP134, a versatile pollutant degrader.</title>
        <authorList>
            <person name="Lykidis A."/>
            <person name="Perez-Pantoja D."/>
            <person name="Ledger T."/>
            <person name="Mavromatis K."/>
            <person name="Anderson I.J."/>
            <person name="Ivanova N.N."/>
            <person name="Hooper S.D."/>
            <person name="Lapidus A."/>
            <person name="Lucas S."/>
            <person name="Gonzalez B."/>
            <person name="Kyrpides N.C."/>
        </authorList>
    </citation>
    <scope>NUCLEOTIDE SEQUENCE [LARGE SCALE GENOMIC DNA]</scope>
    <source>
        <strain>JMP134 / LMG 1197</strain>
    </source>
</reference>
<proteinExistence type="inferred from homology"/>
<sequence length="167" mass="17988">MDHGFYPSNLDGEGLRIGIVQARFNEPVCAELLEACVAELEKLGVEGEDTLVVTVPGALEVPLALQKMAESGQFDALVALGAVVRGETYHFELVSNESGAGITRVGLDFNMPVANGILTVDTDEQAHARTREKGRDCARAAVEMANLVVALDSLRDQEDEEDEDDDE</sequence>
<keyword id="KW-0686">Riboflavin biosynthesis</keyword>
<keyword id="KW-0808">Transferase</keyword>
<accession>Q474N4</accession>
<evidence type="ECO:0000255" key="1">
    <source>
        <dbReference type="HAMAP-Rule" id="MF_00178"/>
    </source>
</evidence>
<name>RISB_CUPPJ</name>
<dbReference type="EC" id="2.5.1.78" evidence="1"/>
<dbReference type="EMBL" id="CP000090">
    <property type="protein sequence ID" value="AAZ60149.1"/>
    <property type="molecule type" value="Genomic_DNA"/>
</dbReference>
<dbReference type="SMR" id="Q474N4"/>
<dbReference type="STRING" id="264198.Reut_A0769"/>
<dbReference type="KEGG" id="reu:Reut_A0769"/>
<dbReference type="eggNOG" id="COG0054">
    <property type="taxonomic scope" value="Bacteria"/>
</dbReference>
<dbReference type="HOGENOM" id="CLU_089358_1_2_4"/>
<dbReference type="OrthoDB" id="9809709at2"/>
<dbReference type="UniPathway" id="UPA00275">
    <property type="reaction ID" value="UER00404"/>
</dbReference>
<dbReference type="GO" id="GO:0005829">
    <property type="term" value="C:cytosol"/>
    <property type="evidence" value="ECO:0007669"/>
    <property type="project" value="TreeGrafter"/>
</dbReference>
<dbReference type="GO" id="GO:0009349">
    <property type="term" value="C:riboflavin synthase complex"/>
    <property type="evidence" value="ECO:0007669"/>
    <property type="project" value="InterPro"/>
</dbReference>
<dbReference type="GO" id="GO:0000906">
    <property type="term" value="F:6,7-dimethyl-8-ribityllumazine synthase activity"/>
    <property type="evidence" value="ECO:0007669"/>
    <property type="project" value="UniProtKB-UniRule"/>
</dbReference>
<dbReference type="GO" id="GO:0009231">
    <property type="term" value="P:riboflavin biosynthetic process"/>
    <property type="evidence" value="ECO:0007669"/>
    <property type="project" value="UniProtKB-UniRule"/>
</dbReference>
<dbReference type="CDD" id="cd09209">
    <property type="entry name" value="Lumazine_synthase-I"/>
    <property type="match status" value="1"/>
</dbReference>
<dbReference type="Gene3D" id="3.40.50.960">
    <property type="entry name" value="Lumazine/riboflavin synthase"/>
    <property type="match status" value="1"/>
</dbReference>
<dbReference type="HAMAP" id="MF_00178">
    <property type="entry name" value="Lumazine_synth"/>
    <property type="match status" value="1"/>
</dbReference>
<dbReference type="InterPro" id="IPR034964">
    <property type="entry name" value="LS"/>
</dbReference>
<dbReference type="InterPro" id="IPR002180">
    <property type="entry name" value="LS/RS"/>
</dbReference>
<dbReference type="InterPro" id="IPR036467">
    <property type="entry name" value="LS/RS_sf"/>
</dbReference>
<dbReference type="NCBIfam" id="TIGR00114">
    <property type="entry name" value="lumazine-synth"/>
    <property type="match status" value="1"/>
</dbReference>
<dbReference type="PANTHER" id="PTHR21058:SF0">
    <property type="entry name" value="6,7-DIMETHYL-8-RIBITYLLUMAZINE SYNTHASE"/>
    <property type="match status" value="1"/>
</dbReference>
<dbReference type="PANTHER" id="PTHR21058">
    <property type="entry name" value="6,7-DIMETHYL-8-RIBITYLLUMAZINE SYNTHASE DMRL SYNTHASE LUMAZINE SYNTHASE"/>
    <property type="match status" value="1"/>
</dbReference>
<dbReference type="Pfam" id="PF00885">
    <property type="entry name" value="DMRL_synthase"/>
    <property type="match status" value="1"/>
</dbReference>
<dbReference type="SUPFAM" id="SSF52121">
    <property type="entry name" value="Lumazine synthase"/>
    <property type="match status" value="1"/>
</dbReference>